<feature type="chain" id="PRO_0000082573" description="Ubiquitin-conjugating enzyme E2 2">
    <location>
        <begin position="1"/>
        <end position="152"/>
    </location>
</feature>
<feature type="domain" description="UBC core" evidence="1">
    <location>
        <begin position="4"/>
        <end position="150"/>
    </location>
</feature>
<feature type="active site" description="Glycyl thioester intermediate" evidence="1">
    <location>
        <position position="88"/>
    </location>
</feature>
<feature type="mutagenesis site" description="Loss of activity." evidence="3">
    <original>C</original>
    <variation>S</variation>
    <location>
        <position position="88"/>
    </location>
</feature>
<name>UBC2_WHEAT</name>
<keyword id="KW-0067">ATP-binding</keyword>
<keyword id="KW-0547">Nucleotide-binding</keyword>
<keyword id="KW-1185">Reference proteome</keyword>
<keyword id="KW-0808">Transferase</keyword>
<keyword id="KW-0833">Ubl conjugation pathway</keyword>
<dbReference type="EC" id="2.3.2.23"/>
<dbReference type="EMBL" id="M62720">
    <property type="protein sequence ID" value="AAA34310.1"/>
    <property type="molecule type" value="mRNA"/>
</dbReference>
<dbReference type="SMR" id="P25866"/>
<dbReference type="STRING" id="4565.P25866"/>
<dbReference type="PaxDb" id="4565-Traes_5BL_D7BE0A670.1"/>
<dbReference type="EnsemblPlants" id="TraesARI5A03G02784150.1">
    <property type="protein sequence ID" value="TraesARI5A03G02784150.1"/>
    <property type="gene ID" value="TraesARI5A03G02784150"/>
</dbReference>
<dbReference type="EnsemblPlants" id="TraesARI5D03G03147940.1">
    <property type="protein sequence ID" value="TraesARI5D03G03147940.1"/>
    <property type="gene ID" value="TraesARI5D03G03147940"/>
</dbReference>
<dbReference type="EnsemblPlants" id="TraesARI7B03G04295630.1">
    <property type="protein sequence ID" value="TraesARI7B03G04295630.1"/>
    <property type="gene ID" value="TraesARI7B03G04295630"/>
</dbReference>
<dbReference type="EnsemblPlants" id="TraesARI7B03G04295630.2">
    <property type="protein sequence ID" value="TraesARI7B03G04295630.2"/>
    <property type="gene ID" value="TraesARI7B03G04295630"/>
</dbReference>
<dbReference type="EnsemblPlants" id="TraesCAD_scaffold_006725_01G000300.1">
    <property type="protein sequence ID" value="TraesCAD_scaffold_006725_01G000300.1"/>
    <property type="gene ID" value="TraesCAD_scaffold_006725_01G000300"/>
</dbReference>
<dbReference type="EnsemblPlants" id="TraesCAD_scaffold_015453_01G000200.1">
    <property type="protein sequence ID" value="TraesCAD_scaffold_015453_01G000200.1"/>
    <property type="gene ID" value="TraesCAD_scaffold_015453_01G000200"/>
</dbReference>
<dbReference type="EnsemblPlants" id="TraesCAD_scaffold_019556_01G000100.1">
    <property type="protein sequence ID" value="TraesCAD_scaffold_019556_01G000100.1"/>
    <property type="gene ID" value="TraesCAD_scaffold_019556_01G000100"/>
</dbReference>
<dbReference type="EnsemblPlants" id="TraesCLE_scaffold_003163_01G001000.1">
    <property type="protein sequence ID" value="TraesCLE_scaffold_003163_01G001000.1"/>
    <property type="gene ID" value="TraesCLE_scaffold_003163_01G001000"/>
</dbReference>
<dbReference type="EnsemblPlants" id="TraesCLE_scaffold_068154_01G000200.1">
    <property type="protein sequence ID" value="TraesCLE_scaffold_068154_01G000200.1"/>
    <property type="gene ID" value="TraesCLE_scaffold_068154_01G000200"/>
</dbReference>
<dbReference type="EnsemblPlants" id="TraesCLE_scaffold_069524_01G000200.1">
    <property type="protein sequence ID" value="TraesCLE_scaffold_069524_01G000200.1"/>
    <property type="gene ID" value="TraesCLE_scaffold_069524_01G000200"/>
</dbReference>
<dbReference type="EnsemblPlants" id="TraesCS5A02G429000.1">
    <property type="protein sequence ID" value="TraesCS5A02G429000.1"/>
    <property type="gene ID" value="TraesCS5A02G429000"/>
</dbReference>
<dbReference type="EnsemblPlants" id="TraesCS5A03G1014200.3">
    <property type="protein sequence ID" value="TraesCS5A03G1014200.3.CDS"/>
    <property type="gene ID" value="TraesCS5A03G1014200"/>
</dbReference>
<dbReference type="EnsemblPlants" id="TraesCS5B02G431100.1">
    <property type="protein sequence ID" value="TraesCS5B02G431100.1"/>
    <property type="gene ID" value="TraesCS5B02G431100"/>
</dbReference>
<dbReference type="EnsemblPlants" id="TraesCS5B03G1060700.3">
    <property type="protein sequence ID" value="TraesCS5B03G1060700.3.CDS"/>
    <property type="gene ID" value="TraesCS5B03G1060700"/>
</dbReference>
<dbReference type="EnsemblPlants" id="TraesCS5D02G437100.1">
    <property type="protein sequence ID" value="TraesCS5D02G437100.1"/>
    <property type="gene ID" value="TraesCS5D02G437100"/>
</dbReference>
<dbReference type="EnsemblPlants" id="TraesCS5D03G0959200.3">
    <property type="protein sequence ID" value="TraesCS5D03G0959200.3.CDS"/>
    <property type="gene ID" value="TraesCS5D03G0959200"/>
</dbReference>
<dbReference type="EnsemblPlants" id="TraesJAG5A03G02743630.1">
    <property type="protein sequence ID" value="TraesJAG5A03G02743630.1"/>
    <property type="gene ID" value="TraesJAG5A03G02743630"/>
</dbReference>
<dbReference type="EnsemblPlants" id="TraesJAG5B03G02972070.1">
    <property type="protein sequence ID" value="TraesJAG5B03G02972070.1"/>
    <property type="gene ID" value="TraesJAG5B03G02972070"/>
</dbReference>
<dbReference type="EnsemblPlants" id="TraesJAG5D03G03191650.1">
    <property type="protein sequence ID" value="TraesJAG5D03G03191650.1"/>
    <property type="gene ID" value="TraesJAG5D03G03191650"/>
</dbReference>
<dbReference type="EnsemblPlants" id="TraesJUL5A03G02761040.1">
    <property type="protein sequence ID" value="TraesJUL5A03G02761040.1"/>
    <property type="gene ID" value="TraesJUL5A03G02761040"/>
</dbReference>
<dbReference type="EnsemblPlants" id="TraesJUL5B03G02996740.1">
    <property type="protein sequence ID" value="TraesJUL5B03G02996740.1"/>
    <property type="gene ID" value="TraesJUL5B03G02996740"/>
</dbReference>
<dbReference type="EnsemblPlants" id="TraesJUL5D03G03219430.1">
    <property type="protein sequence ID" value="TraesJUL5D03G03219430.1"/>
    <property type="gene ID" value="TraesJUL5D03G03219430"/>
</dbReference>
<dbReference type="EnsemblPlants" id="TraesKAR5A01G0373420.1">
    <property type="protein sequence ID" value="cds.TraesKAR5A01G0373420.1"/>
    <property type="gene ID" value="TraesKAR5A01G0373420"/>
</dbReference>
<dbReference type="EnsemblPlants" id="TraesKAR5B01G0400680.1">
    <property type="protein sequence ID" value="cds.TraesKAR5B01G0400680.1"/>
    <property type="gene ID" value="TraesKAR5B01G0400680"/>
</dbReference>
<dbReference type="EnsemblPlants" id="TraesKAR5D01G0358050.1">
    <property type="protein sequence ID" value="cds.TraesKAR5D01G0358050.1"/>
    <property type="gene ID" value="TraesKAR5D01G0358050"/>
</dbReference>
<dbReference type="EnsemblPlants" id="TraesLAC5A03G02696320.1">
    <property type="protein sequence ID" value="TraesLAC5A03G02696320.1"/>
    <property type="gene ID" value="TraesLAC5A03G02696320"/>
</dbReference>
<dbReference type="EnsemblPlants" id="TraesLAC5B03G02929760.1">
    <property type="protein sequence ID" value="TraesLAC5B03G02929760.1"/>
    <property type="gene ID" value="TraesLAC5B03G02929760"/>
</dbReference>
<dbReference type="EnsemblPlants" id="TraesLAC5B03G02929760.2">
    <property type="protein sequence ID" value="TraesLAC5B03G02929760.2"/>
    <property type="gene ID" value="TraesLAC5B03G02929760"/>
</dbReference>
<dbReference type="EnsemblPlants" id="TraesLAC5D03G03150040.1">
    <property type="protein sequence ID" value="TraesLAC5D03G03150040.1"/>
    <property type="gene ID" value="TraesLAC5D03G03150040"/>
</dbReference>
<dbReference type="EnsemblPlants" id="TraesLDM5A03G02744890.1">
    <property type="protein sequence ID" value="TraesLDM5A03G02744890.1"/>
    <property type="gene ID" value="TraesLDM5A03G02744890"/>
</dbReference>
<dbReference type="EnsemblPlants" id="TraesLDM5B03G02978620.1">
    <property type="protein sequence ID" value="TraesLDM5B03G02978620.1"/>
    <property type="gene ID" value="TraesLDM5B03G02978620"/>
</dbReference>
<dbReference type="EnsemblPlants" id="TraesLDM5B03G02978620.2">
    <property type="protein sequence ID" value="TraesLDM5B03G02978620.2"/>
    <property type="gene ID" value="TraesLDM5B03G02978620"/>
</dbReference>
<dbReference type="EnsemblPlants" id="TraesLDM5D03G03199170.1">
    <property type="protein sequence ID" value="TraesLDM5D03G03199170.1"/>
    <property type="gene ID" value="TraesLDM5D03G03199170"/>
</dbReference>
<dbReference type="EnsemblPlants" id="TraesMAC5A03G02740450.1">
    <property type="protein sequence ID" value="TraesMAC5A03G02740450.1"/>
    <property type="gene ID" value="TraesMAC5A03G02740450"/>
</dbReference>
<dbReference type="EnsemblPlants" id="TraesMAC5B03G02973090.1">
    <property type="protein sequence ID" value="TraesMAC5B03G02973090.1"/>
    <property type="gene ID" value="TraesMAC5B03G02973090"/>
</dbReference>
<dbReference type="EnsemblPlants" id="TraesMAC5B03G02973090.2">
    <property type="protein sequence ID" value="TraesMAC5B03G02973090.2"/>
    <property type="gene ID" value="TraesMAC5B03G02973090"/>
</dbReference>
<dbReference type="EnsemblPlants" id="TraesMAC5D03G03193070.1">
    <property type="protein sequence ID" value="TraesMAC5D03G03193070.1"/>
    <property type="gene ID" value="TraesMAC5D03G03193070"/>
</dbReference>
<dbReference type="EnsemblPlants" id="TraesNOR5A03G02765830.1">
    <property type="protein sequence ID" value="TraesNOR5A03G02765830.1"/>
    <property type="gene ID" value="TraesNOR5A03G02765830"/>
</dbReference>
<dbReference type="EnsemblPlants" id="TraesNOR5B03G03003530.1">
    <property type="protein sequence ID" value="TraesNOR5B03G03003530.1"/>
    <property type="gene ID" value="TraesNOR5B03G03003530"/>
</dbReference>
<dbReference type="EnsemblPlants" id="TraesNOR5D03G03223770.1">
    <property type="protein sequence ID" value="TraesNOR5D03G03223770.1"/>
    <property type="gene ID" value="TraesNOR5D03G03223770"/>
</dbReference>
<dbReference type="EnsemblPlants" id="TraesPARA_EIv1.0_1530450.1">
    <property type="protein sequence ID" value="TraesPARA_EIv1.0_1530450.1.CDS"/>
    <property type="gene ID" value="TraesPARA_EIv1.0_1530450"/>
</dbReference>
<dbReference type="EnsemblPlants" id="TraesPARA_EIv1.0_1732170.1">
    <property type="protein sequence ID" value="TraesPARA_EIv1.0_1732170.1.CDS"/>
    <property type="gene ID" value="TraesPARA_EIv1.0_1732170"/>
</dbReference>
<dbReference type="EnsemblPlants" id="TraesPARA_EIv1.0_1732170.3">
    <property type="protein sequence ID" value="TraesPARA_EIv1.0_1732170.3.CDS"/>
    <property type="gene ID" value="TraesPARA_EIv1.0_1732170"/>
</dbReference>
<dbReference type="EnsemblPlants" id="TraesPARA_EIv1.0_1861450.1">
    <property type="protein sequence ID" value="TraesPARA_EIv1.0_1861450.1.CDS"/>
    <property type="gene ID" value="TraesPARA_EIv1.0_1861450"/>
</dbReference>
<dbReference type="EnsemblPlants" id="TraesRN5B0101030700.3">
    <property type="protein sequence ID" value="TraesRN5B0101030700.3"/>
    <property type="gene ID" value="TraesRN5B0101030700"/>
</dbReference>
<dbReference type="EnsemblPlants" id="TraesROB_scaffold_044854_01G000200.1">
    <property type="protein sequence ID" value="TraesROB_scaffold_044854_01G000200.1"/>
    <property type="gene ID" value="TraesROB_scaffold_044854_01G000200"/>
</dbReference>
<dbReference type="EnsemblPlants" id="TraesROB_scaffold_071098_01G000200.1">
    <property type="protein sequence ID" value="TraesROB_scaffold_071098_01G000200.1"/>
    <property type="gene ID" value="TraesROB_scaffold_071098_01G000200"/>
</dbReference>
<dbReference type="EnsemblPlants" id="TraesROB_scaffold_132899_01G000100.1">
    <property type="protein sequence ID" value="TraesROB_scaffold_132899_01G000100.1"/>
    <property type="gene ID" value="TraesROB_scaffold_132899_01G000100"/>
</dbReference>
<dbReference type="EnsemblPlants" id="TraesSTA5A03G02733070.1">
    <property type="protein sequence ID" value="TraesSTA5A03G02733070.1"/>
    <property type="gene ID" value="TraesSTA5A03G02733070"/>
</dbReference>
<dbReference type="EnsemblPlants" id="TraesSTA5B03G02966380.1">
    <property type="protein sequence ID" value="TraesSTA5B03G02966380.1"/>
    <property type="gene ID" value="TraesSTA5B03G02966380"/>
</dbReference>
<dbReference type="EnsemblPlants" id="TraesSTA5B03G02966380.2">
    <property type="protein sequence ID" value="TraesSTA5B03G02966380.2"/>
    <property type="gene ID" value="TraesSTA5B03G02966380"/>
</dbReference>
<dbReference type="EnsemblPlants" id="TraesSTA5D03G03185340.1">
    <property type="protein sequence ID" value="TraesSTA5D03G03185340.1"/>
    <property type="gene ID" value="TraesSTA5D03G03185340"/>
</dbReference>
<dbReference type="EnsemblPlants" id="TraesSYM5A03G02771670.1">
    <property type="protein sequence ID" value="TraesSYM5A03G02771670.1"/>
    <property type="gene ID" value="TraesSYM5A03G02771670"/>
</dbReference>
<dbReference type="EnsemblPlants" id="TraesSYM5D03G03135130.1">
    <property type="protein sequence ID" value="TraesSYM5D03G03135130.1"/>
    <property type="gene ID" value="TraesSYM5D03G03135130"/>
</dbReference>
<dbReference type="EnsemblPlants" id="TraesSYM7B03G04044370.1">
    <property type="protein sequence ID" value="TraesSYM7B03G04044370.1"/>
    <property type="gene ID" value="TraesSYM7B03G04044370"/>
</dbReference>
<dbReference type="EnsemblPlants" id="TraesWEE_scaffold_005805_01G001000.1">
    <property type="protein sequence ID" value="TraesWEE_scaffold_005805_01G001000.1"/>
    <property type="gene ID" value="TraesWEE_scaffold_005805_01G001000"/>
</dbReference>
<dbReference type="EnsemblPlants" id="TraesWEE_scaffold_044390_01G000200.1">
    <property type="protein sequence ID" value="TraesWEE_scaffold_044390_01G000200.1"/>
    <property type="gene ID" value="TraesWEE_scaffold_044390_01G000200"/>
</dbReference>
<dbReference type="EnsemblPlants" id="TraesWEE_scaffold_086268_01G000200.1">
    <property type="protein sequence ID" value="TraesWEE_scaffold_086268_01G000200.1"/>
    <property type="gene ID" value="TraesWEE_scaffold_086268_01G000200"/>
</dbReference>
<dbReference type="Gramene" id="TraesARI5A03G02784150.1">
    <property type="protein sequence ID" value="TraesARI5A03G02784150.1"/>
    <property type="gene ID" value="TraesARI5A03G02784150"/>
</dbReference>
<dbReference type="Gramene" id="TraesARI5D03G03147940.1">
    <property type="protein sequence ID" value="TraesARI5D03G03147940.1"/>
    <property type="gene ID" value="TraesARI5D03G03147940"/>
</dbReference>
<dbReference type="Gramene" id="TraesARI7B03G04295630.1">
    <property type="protein sequence ID" value="TraesARI7B03G04295630.1"/>
    <property type="gene ID" value="TraesARI7B03G04295630"/>
</dbReference>
<dbReference type="Gramene" id="TraesARI7B03G04295630.2">
    <property type="protein sequence ID" value="TraesARI7B03G04295630.2"/>
    <property type="gene ID" value="TraesARI7B03G04295630"/>
</dbReference>
<dbReference type="Gramene" id="TraesCAD_scaffold_006725_01G000300.1">
    <property type="protein sequence ID" value="TraesCAD_scaffold_006725_01G000300.1"/>
    <property type="gene ID" value="TraesCAD_scaffold_006725_01G000300"/>
</dbReference>
<dbReference type="Gramene" id="TraesCAD_scaffold_015453_01G000200.1">
    <property type="protein sequence ID" value="TraesCAD_scaffold_015453_01G000200.1"/>
    <property type="gene ID" value="TraesCAD_scaffold_015453_01G000200"/>
</dbReference>
<dbReference type="Gramene" id="TraesCAD_scaffold_019556_01G000100.1">
    <property type="protein sequence ID" value="TraesCAD_scaffold_019556_01G000100.1"/>
    <property type="gene ID" value="TraesCAD_scaffold_019556_01G000100"/>
</dbReference>
<dbReference type="Gramene" id="TraesCLE_scaffold_003163_01G001000.1">
    <property type="protein sequence ID" value="TraesCLE_scaffold_003163_01G001000.1"/>
    <property type="gene ID" value="TraesCLE_scaffold_003163_01G001000"/>
</dbReference>
<dbReference type="Gramene" id="TraesCLE_scaffold_068154_01G000200.1">
    <property type="protein sequence ID" value="TraesCLE_scaffold_068154_01G000200.1"/>
    <property type="gene ID" value="TraesCLE_scaffold_068154_01G000200"/>
</dbReference>
<dbReference type="Gramene" id="TraesCLE_scaffold_069524_01G000200.1">
    <property type="protein sequence ID" value="TraesCLE_scaffold_069524_01G000200.1"/>
    <property type="gene ID" value="TraesCLE_scaffold_069524_01G000200"/>
</dbReference>
<dbReference type="Gramene" id="TraesCS5A02G429000.1">
    <property type="protein sequence ID" value="TraesCS5A02G429000.1"/>
    <property type="gene ID" value="TraesCS5A02G429000"/>
</dbReference>
<dbReference type="Gramene" id="TraesCS5A03G1014200.3">
    <property type="protein sequence ID" value="TraesCS5A03G1014200.3.CDS"/>
    <property type="gene ID" value="TraesCS5A03G1014200"/>
</dbReference>
<dbReference type="Gramene" id="TraesCS5B02G431100.1">
    <property type="protein sequence ID" value="TraesCS5B02G431100.1"/>
    <property type="gene ID" value="TraesCS5B02G431100"/>
</dbReference>
<dbReference type="Gramene" id="TraesCS5B03G1060700.3">
    <property type="protein sequence ID" value="TraesCS5B03G1060700.3.CDS"/>
    <property type="gene ID" value="TraesCS5B03G1060700"/>
</dbReference>
<dbReference type="Gramene" id="TraesCS5D02G437100.1">
    <property type="protein sequence ID" value="TraesCS5D02G437100.1"/>
    <property type="gene ID" value="TraesCS5D02G437100"/>
</dbReference>
<dbReference type="Gramene" id="TraesCS5D03G0959200.3">
    <property type="protein sequence ID" value="TraesCS5D03G0959200.3.CDS"/>
    <property type="gene ID" value="TraesCS5D03G0959200"/>
</dbReference>
<dbReference type="Gramene" id="TraesJAG5A03G02743630.1">
    <property type="protein sequence ID" value="TraesJAG5A03G02743630.1"/>
    <property type="gene ID" value="TraesJAG5A03G02743630"/>
</dbReference>
<dbReference type="Gramene" id="TraesJAG5B03G02972070.1">
    <property type="protein sequence ID" value="TraesJAG5B03G02972070.1"/>
    <property type="gene ID" value="TraesJAG5B03G02972070"/>
</dbReference>
<dbReference type="Gramene" id="TraesJAG5D03G03191650.1">
    <property type="protein sequence ID" value="TraesJAG5D03G03191650.1"/>
    <property type="gene ID" value="TraesJAG5D03G03191650"/>
</dbReference>
<dbReference type="Gramene" id="TraesJUL5A03G02761040.1">
    <property type="protein sequence ID" value="TraesJUL5A03G02761040.1"/>
    <property type="gene ID" value="TraesJUL5A03G02761040"/>
</dbReference>
<dbReference type="Gramene" id="TraesJUL5B03G02996740.1">
    <property type="protein sequence ID" value="TraesJUL5B03G02996740.1"/>
    <property type="gene ID" value="TraesJUL5B03G02996740"/>
</dbReference>
<dbReference type="Gramene" id="TraesJUL5D03G03219430.1">
    <property type="protein sequence ID" value="TraesJUL5D03G03219430.1"/>
    <property type="gene ID" value="TraesJUL5D03G03219430"/>
</dbReference>
<dbReference type="Gramene" id="TraesKAR5A01G0373420.1">
    <property type="protein sequence ID" value="cds.TraesKAR5A01G0373420.1"/>
    <property type="gene ID" value="TraesKAR5A01G0373420"/>
</dbReference>
<dbReference type="Gramene" id="TraesKAR5B01G0400680.1">
    <property type="protein sequence ID" value="cds.TraesKAR5B01G0400680.1"/>
    <property type="gene ID" value="TraesKAR5B01G0400680"/>
</dbReference>
<dbReference type="Gramene" id="TraesKAR5D01G0358050.1">
    <property type="protein sequence ID" value="cds.TraesKAR5D01G0358050.1"/>
    <property type="gene ID" value="TraesKAR5D01G0358050"/>
</dbReference>
<dbReference type="Gramene" id="TraesLAC5A03G02696320.1">
    <property type="protein sequence ID" value="TraesLAC5A03G02696320.1"/>
    <property type="gene ID" value="TraesLAC5A03G02696320"/>
</dbReference>
<dbReference type="Gramene" id="TraesLAC5B03G02929760.1">
    <property type="protein sequence ID" value="TraesLAC5B03G02929760.1"/>
    <property type="gene ID" value="TraesLAC5B03G02929760"/>
</dbReference>
<dbReference type="Gramene" id="TraesLAC5B03G02929760.2">
    <property type="protein sequence ID" value="TraesLAC5B03G02929760.2"/>
    <property type="gene ID" value="TraesLAC5B03G02929760"/>
</dbReference>
<dbReference type="Gramene" id="TraesLAC5D03G03150040.1">
    <property type="protein sequence ID" value="TraesLAC5D03G03150040.1"/>
    <property type="gene ID" value="TraesLAC5D03G03150040"/>
</dbReference>
<dbReference type="Gramene" id="TraesLDM5A03G02744890.1">
    <property type="protein sequence ID" value="TraesLDM5A03G02744890.1"/>
    <property type="gene ID" value="TraesLDM5A03G02744890"/>
</dbReference>
<dbReference type="Gramene" id="TraesLDM5B03G02978620.1">
    <property type="protein sequence ID" value="TraesLDM5B03G02978620.1"/>
    <property type="gene ID" value="TraesLDM5B03G02978620"/>
</dbReference>
<dbReference type="Gramene" id="TraesLDM5B03G02978620.2">
    <property type="protein sequence ID" value="TraesLDM5B03G02978620.2"/>
    <property type="gene ID" value="TraesLDM5B03G02978620"/>
</dbReference>
<dbReference type="Gramene" id="TraesLDM5D03G03199170.1">
    <property type="protein sequence ID" value="TraesLDM5D03G03199170.1"/>
    <property type="gene ID" value="TraesLDM5D03G03199170"/>
</dbReference>
<dbReference type="Gramene" id="TraesMAC5A03G02740450.1">
    <property type="protein sequence ID" value="TraesMAC5A03G02740450.1"/>
    <property type="gene ID" value="TraesMAC5A03G02740450"/>
</dbReference>
<dbReference type="Gramene" id="TraesMAC5B03G02973090.1">
    <property type="protein sequence ID" value="TraesMAC5B03G02973090.1"/>
    <property type="gene ID" value="TraesMAC5B03G02973090"/>
</dbReference>
<dbReference type="Gramene" id="TraesMAC5B03G02973090.2">
    <property type="protein sequence ID" value="TraesMAC5B03G02973090.2"/>
    <property type="gene ID" value="TraesMAC5B03G02973090"/>
</dbReference>
<dbReference type="Gramene" id="TraesMAC5D03G03193070.1">
    <property type="protein sequence ID" value="TraesMAC5D03G03193070.1"/>
    <property type="gene ID" value="TraesMAC5D03G03193070"/>
</dbReference>
<dbReference type="Gramene" id="TraesNOR5A03G02765830.1">
    <property type="protein sequence ID" value="TraesNOR5A03G02765830.1"/>
    <property type="gene ID" value="TraesNOR5A03G02765830"/>
</dbReference>
<dbReference type="Gramene" id="TraesNOR5B03G03003530.1">
    <property type="protein sequence ID" value="TraesNOR5B03G03003530.1"/>
    <property type="gene ID" value="TraesNOR5B03G03003530"/>
</dbReference>
<dbReference type="Gramene" id="TraesNOR5D03G03223770.1">
    <property type="protein sequence ID" value="TraesNOR5D03G03223770.1"/>
    <property type="gene ID" value="TraesNOR5D03G03223770"/>
</dbReference>
<dbReference type="Gramene" id="TraesPARA_EIv1.0_1530450.1">
    <property type="protein sequence ID" value="TraesPARA_EIv1.0_1530450.1.CDS"/>
    <property type="gene ID" value="TraesPARA_EIv1.0_1530450"/>
</dbReference>
<dbReference type="Gramene" id="TraesPARA_EIv1.0_1732170.1">
    <property type="protein sequence ID" value="TraesPARA_EIv1.0_1732170.1.CDS"/>
    <property type="gene ID" value="TraesPARA_EIv1.0_1732170"/>
</dbReference>
<dbReference type="Gramene" id="TraesPARA_EIv1.0_1732170.3">
    <property type="protein sequence ID" value="TraesPARA_EIv1.0_1732170.3.CDS"/>
    <property type="gene ID" value="TraesPARA_EIv1.0_1732170"/>
</dbReference>
<dbReference type="Gramene" id="TraesPARA_EIv1.0_1861450.1">
    <property type="protein sequence ID" value="TraesPARA_EIv1.0_1861450.1.CDS"/>
    <property type="gene ID" value="TraesPARA_EIv1.0_1861450"/>
</dbReference>
<dbReference type="Gramene" id="TraesRN5B0101030700.3">
    <property type="protein sequence ID" value="TraesRN5B0101030700.3"/>
    <property type="gene ID" value="TraesRN5B0101030700"/>
</dbReference>
<dbReference type="Gramene" id="TraesROB_scaffold_044854_01G000200.1">
    <property type="protein sequence ID" value="TraesROB_scaffold_044854_01G000200.1"/>
    <property type="gene ID" value="TraesROB_scaffold_044854_01G000200"/>
</dbReference>
<dbReference type="Gramene" id="TraesROB_scaffold_071098_01G000200.1">
    <property type="protein sequence ID" value="TraesROB_scaffold_071098_01G000200.1"/>
    <property type="gene ID" value="TraesROB_scaffold_071098_01G000200"/>
</dbReference>
<dbReference type="Gramene" id="TraesROB_scaffold_132899_01G000100.1">
    <property type="protein sequence ID" value="TraesROB_scaffold_132899_01G000100.1"/>
    <property type="gene ID" value="TraesROB_scaffold_132899_01G000100"/>
</dbReference>
<dbReference type="Gramene" id="TraesSTA5A03G02733070.1">
    <property type="protein sequence ID" value="TraesSTA5A03G02733070.1"/>
    <property type="gene ID" value="TraesSTA5A03G02733070"/>
</dbReference>
<dbReference type="Gramene" id="TraesSTA5B03G02966380.1">
    <property type="protein sequence ID" value="TraesSTA5B03G02966380.1"/>
    <property type="gene ID" value="TraesSTA5B03G02966380"/>
</dbReference>
<dbReference type="Gramene" id="TraesSTA5B03G02966380.2">
    <property type="protein sequence ID" value="TraesSTA5B03G02966380.2"/>
    <property type="gene ID" value="TraesSTA5B03G02966380"/>
</dbReference>
<dbReference type="Gramene" id="TraesSTA5D03G03185340.1">
    <property type="protein sequence ID" value="TraesSTA5D03G03185340.1"/>
    <property type="gene ID" value="TraesSTA5D03G03185340"/>
</dbReference>
<dbReference type="Gramene" id="TraesSYM5A03G02771670.1">
    <property type="protein sequence ID" value="TraesSYM5A03G02771670.1"/>
    <property type="gene ID" value="TraesSYM5A03G02771670"/>
</dbReference>
<dbReference type="Gramene" id="TraesSYM5D03G03135130.1">
    <property type="protein sequence ID" value="TraesSYM5D03G03135130.1"/>
    <property type="gene ID" value="TraesSYM5D03G03135130"/>
</dbReference>
<dbReference type="Gramene" id="TraesSYM7B03G04044370.1">
    <property type="protein sequence ID" value="TraesSYM7B03G04044370.1"/>
    <property type="gene ID" value="TraesSYM7B03G04044370"/>
</dbReference>
<dbReference type="Gramene" id="TraesWEE_scaffold_005805_01G001000.1">
    <property type="protein sequence ID" value="TraesWEE_scaffold_005805_01G001000.1"/>
    <property type="gene ID" value="TraesWEE_scaffold_005805_01G001000"/>
</dbReference>
<dbReference type="Gramene" id="TraesWEE_scaffold_044390_01G000200.1">
    <property type="protein sequence ID" value="TraesWEE_scaffold_044390_01G000200.1"/>
    <property type="gene ID" value="TraesWEE_scaffold_044390_01G000200"/>
</dbReference>
<dbReference type="Gramene" id="TraesWEE_scaffold_086268_01G000200.1">
    <property type="protein sequence ID" value="TraesWEE_scaffold_086268_01G000200.1"/>
    <property type="gene ID" value="TraesWEE_scaffold_086268_01G000200"/>
</dbReference>
<dbReference type="eggNOG" id="KOG0419">
    <property type="taxonomic scope" value="Eukaryota"/>
</dbReference>
<dbReference type="OMA" id="NILRWHA"/>
<dbReference type="OrthoDB" id="9984419at2759"/>
<dbReference type="UniPathway" id="UPA00143"/>
<dbReference type="Proteomes" id="UP000019116">
    <property type="component" value="Chromosome 5A"/>
</dbReference>
<dbReference type="Proteomes" id="UP000019116">
    <property type="component" value="Chromosome 5B"/>
</dbReference>
<dbReference type="Proteomes" id="UP000019116">
    <property type="component" value="Chromosome 5D"/>
</dbReference>
<dbReference type="ExpressionAtlas" id="P25866">
    <property type="expression patterns" value="baseline and differential"/>
</dbReference>
<dbReference type="GO" id="GO:0005524">
    <property type="term" value="F:ATP binding"/>
    <property type="evidence" value="ECO:0007669"/>
    <property type="project" value="UniProtKB-KW"/>
</dbReference>
<dbReference type="GO" id="GO:0061631">
    <property type="term" value="F:ubiquitin conjugating enzyme activity"/>
    <property type="evidence" value="ECO:0000318"/>
    <property type="project" value="GO_Central"/>
</dbReference>
<dbReference type="GO" id="GO:0006281">
    <property type="term" value="P:DNA repair"/>
    <property type="evidence" value="ECO:0000318"/>
    <property type="project" value="GO_Central"/>
</dbReference>
<dbReference type="GO" id="GO:0043161">
    <property type="term" value="P:proteasome-mediated ubiquitin-dependent protein catabolic process"/>
    <property type="evidence" value="ECO:0000318"/>
    <property type="project" value="GO_Central"/>
</dbReference>
<dbReference type="GO" id="GO:0000209">
    <property type="term" value="P:protein polyubiquitination"/>
    <property type="evidence" value="ECO:0000318"/>
    <property type="project" value="GO_Central"/>
</dbReference>
<dbReference type="CDD" id="cd23790">
    <property type="entry name" value="UBCc_UBE2A_2B"/>
    <property type="match status" value="1"/>
</dbReference>
<dbReference type="FunFam" id="3.10.110.10:FF:000017">
    <property type="entry name" value="Ubiquitin-conjugating enzyme E2 2"/>
    <property type="match status" value="1"/>
</dbReference>
<dbReference type="Gene3D" id="3.10.110.10">
    <property type="entry name" value="Ubiquitin Conjugating Enzyme"/>
    <property type="match status" value="1"/>
</dbReference>
<dbReference type="InterPro" id="IPR050113">
    <property type="entry name" value="Ub_conjugating_enzyme"/>
</dbReference>
<dbReference type="InterPro" id="IPR000608">
    <property type="entry name" value="UBQ-conjugat_E2_core"/>
</dbReference>
<dbReference type="InterPro" id="IPR023313">
    <property type="entry name" value="UBQ-conjugating_AS"/>
</dbReference>
<dbReference type="InterPro" id="IPR016135">
    <property type="entry name" value="UBQ-conjugating_enzyme/RWD"/>
</dbReference>
<dbReference type="PANTHER" id="PTHR24067">
    <property type="entry name" value="UBIQUITIN-CONJUGATING ENZYME E2"/>
    <property type="match status" value="1"/>
</dbReference>
<dbReference type="Pfam" id="PF00179">
    <property type="entry name" value="UQ_con"/>
    <property type="match status" value="1"/>
</dbReference>
<dbReference type="SMART" id="SM00212">
    <property type="entry name" value="UBCc"/>
    <property type="match status" value="1"/>
</dbReference>
<dbReference type="SUPFAM" id="SSF54495">
    <property type="entry name" value="UBC-like"/>
    <property type="match status" value="1"/>
</dbReference>
<dbReference type="PROSITE" id="PS00183">
    <property type="entry name" value="UBC_1"/>
    <property type="match status" value="1"/>
</dbReference>
<dbReference type="PROSITE" id="PS50127">
    <property type="entry name" value="UBC_2"/>
    <property type="match status" value="1"/>
</dbReference>
<sequence length="152" mass="17301">MSTPARKRLMRDFKRLQQDPPAGISGAPHDNNITLWNAVIFGPDDTPWDGGTFKLTLQFTEDYPNKPPTVRFVSRMFHPNIYADGSICLDILQNQWSPIYDVAAILTSIQSLLCDPNPNSPANSEAARMYSENKREYNRKVREVVEQSWTAD</sequence>
<comment type="function">
    <text>Catalyzes the covalent attachment of ubiquitin to other proteins.</text>
</comment>
<comment type="catalytic activity">
    <reaction evidence="1 2">
        <text>S-ubiquitinyl-[E1 ubiquitin-activating enzyme]-L-cysteine + [E2 ubiquitin-conjugating enzyme]-L-cysteine = [E1 ubiquitin-activating enzyme]-L-cysteine + S-ubiquitinyl-[E2 ubiquitin-conjugating enzyme]-L-cysteine.</text>
        <dbReference type="EC" id="2.3.2.23"/>
    </reaction>
</comment>
<comment type="pathway">
    <text evidence="1">Protein modification; protein ubiquitination.</text>
</comment>
<comment type="similarity">
    <text evidence="1">Belongs to the ubiquitin-conjugating enzyme family.</text>
</comment>
<gene>
    <name type="primary">UBC2</name>
    <name type="synonym">UBC1</name>
</gene>
<protein>
    <recommendedName>
        <fullName>Ubiquitin-conjugating enzyme E2 2</fullName>
        <ecNumber>2.3.2.23</ecNumber>
    </recommendedName>
    <alternativeName>
        <fullName>E2 ubiquitin-conjugating enzyme 2</fullName>
    </alternativeName>
    <alternativeName>
        <fullName>Ubiquitin carrier protein 2</fullName>
    </alternativeName>
    <alternativeName>
        <fullName>Ubiquitin-conjugating enzyme E2-16 kDa</fullName>
    </alternativeName>
    <alternativeName>
        <fullName>Ubiquitin-protein ligase 2</fullName>
    </alternativeName>
</protein>
<evidence type="ECO:0000255" key="1">
    <source>
        <dbReference type="PROSITE-ProRule" id="PRU00388"/>
    </source>
</evidence>
<evidence type="ECO:0000255" key="2">
    <source>
        <dbReference type="PROSITE-ProRule" id="PRU10133"/>
    </source>
</evidence>
<evidence type="ECO:0000269" key="3">
    <source>
    </source>
</evidence>
<organism>
    <name type="scientific">Triticum aestivum</name>
    <name type="common">Wheat</name>
    <dbReference type="NCBI Taxonomy" id="4565"/>
    <lineage>
        <taxon>Eukaryota</taxon>
        <taxon>Viridiplantae</taxon>
        <taxon>Streptophyta</taxon>
        <taxon>Embryophyta</taxon>
        <taxon>Tracheophyta</taxon>
        <taxon>Spermatophyta</taxon>
        <taxon>Magnoliopsida</taxon>
        <taxon>Liliopsida</taxon>
        <taxon>Poales</taxon>
        <taxon>Poaceae</taxon>
        <taxon>BOP clade</taxon>
        <taxon>Pooideae</taxon>
        <taxon>Triticodae</taxon>
        <taxon>Triticeae</taxon>
        <taxon>Triticinae</taxon>
        <taxon>Triticum</taxon>
    </lineage>
</organism>
<proteinExistence type="evidence at protein level"/>
<reference key="1">
    <citation type="journal article" date="1991" name="J. Biol. Chem.">
        <title>Cloning of a 16-kDa ubiquitin carrier protein from wheat and Arabidopsis thaliana. Identification of functional domains by in vitro mutagenesis.</title>
        <authorList>
            <person name="Sullivan M.L."/>
            <person name="Vierstra R.D."/>
        </authorList>
    </citation>
    <scope>NUCLEOTIDE SEQUENCE [MRNA]</scope>
    <scope>MUTAGENESIS OF CYS-88</scope>
    <source>
        <strain>cv. Augusta</strain>
    </source>
</reference>
<accession>P25866</accession>